<proteinExistence type="inferred from homology"/>
<protein>
    <recommendedName>
        <fullName>Putative germin-like protein subfamily 1 member 9</fullName>
    </recommendedName>
</protein>
<keyword id="KW-0052">Apoplast</keyword>
<keyword id="KW-1015">Disulfide bond</keyword>
<keyword id="KW-0325">Glycoprotein</keyword>
<keyword id="KW-0464">Manganese</keyword>
<keyword id="KW-0479">Metal-binding</keyword>
<keyword id="KW-1185">Reference proteome</keyword>
<keyword id="KW-0964">Secreted</keyword>
<keyword id="KW-0732">Signal</keyword>
<gene>
    <name type="ordered locus">At5g38910</name>
    <name type="ORF">K15E6.14</name>
    <name type="ORF">K15E6_90</name>
</gene>
<comment type="function">
    <text>May play a role in plant defense. Probably has no oxalate oxidase activity even if the active site is conserved.</text>
</comment>
<comment type="subunit">
    <text evidence="1">Oligomer (believed to be a pentamer but probably hexamer).</text>
</comment>
<comment type="subcellular location">
    <subcellularLocation>
        <location evidence="1">Secreted</location>
        <location evidence="1">Extracellular space</location>
        <location evidence="1">Apoplast</location>
    </subcellularLocation>
</comment>
<comment type="similarity">
    <text evidence="3">Belongs to the germin family.</text>
</comment>
<feature type="signal peptide" evidence="2">
    <location>
        <begin position="1"/>
        <end position="22"/>
    </location>
</feature>
<feature type="chain" id="PRO_0000010809" description="Putative germin-like protein subfamily 1 member 9">
    <location>
        <begin position="23"/>
        <end position="222"/>
    </location>
</feature>
<feature type="domain" description="Cupin type-1" evidence="2">
    <location>
        <begin position="63"/>
        <end position="213"/>
    </location>
</feature>
<feature type="binding site" evidence="1">
    <location>
        <position position="111"/>
    </location>
    <ligand>
        <name>Mn(2+)</name>
        <dbReference type="ChEBI" id="CHEBI:29035"/>
    </ligand>
</feature>
<feature type="binding site" evidence="1">
    <location>
        <position position="113"/>
    </location>
    <ligand>
        <name>Mn(2+)</name>
        <dbReference type="ChEBI" id="CHEBI:29035"/>
    </ligand>
</feature>
<feature type="binding site" evidence="1">
    <location>
        <position position="118"/>
    </location>
    <ligand>
        <name>Mn(2+)</name>
        <dbReference type="ChEBI" id="CHEBI:29035"/>
    </ligand>
</feature>
<feature type="binding site" evidence="1">
    <location>
        <position position="159"/>
    </location>
    <ligand>
        <name>Mn(2+)</name>
        <dbReference type="ChEBI" id="CHEBI:29035"/>
    </ligand>
</feature>
<feature type="glycosylation site" description="N-linked (GlcNAc...) asparagine" evidence="2">
    <location>
        <position position="78"/>
    </location>
</feature>
<feature type="disulfide bond" evidence="1">
    <location>
        <begin position="32"/>
        <end position="49"/>
    </location>
</feature>
<sequence>MKSFSFLAVLSILAITLSLSKASDPSSLQDFCVGVNTPADGVFVNGKFCKDPKLVTVEDFFFTGLHEARPPNPKTGSNVTAVNVNNLPGLNTLGISLVRIDYGVYGQNPPHTHPRASEVLYVAVGTLFVGFVTSNPENRLFSKTLYEGDVFVFPQGLIHFQVNVGKYPAVAFAGLSSQNPGVITIADTVFGSNPQIDPSFLASAFQVDPKIVMDLQTKFIKP</sequence>
<reference key="1">
    <citation type="journal article" date="1998" name="DNA Res.">
        <title>Structural analysis of Arabidopsis thaliana chromosome 5. IV. Sequence features of the regions of 1,456,315 bp covered by nineteen physically assigned P1 and TAC clones.</title>
        <authorList>
            <person name="Sato S."/>
            <person name="Kaneko T."/>
            <person name="Kotani H."/>
            <person name="Nakamura Y."/>
            <person name="Asamizu E."/>
            <person name="Miyajima N."/>
            <person name="Tabata S."/>
        </authorList>
    </citation>
    <scope>NUCLEOTIDE SEQUENCE [LARGE SCALE GENOMIC DNA]</scope>
    <source>
        <strain>cv. Columbia</strain>
    </source>
</reference>
<reference key="2">
    <citation type="journal article" date="2017" name="Plant J.">
        <title>Araport11: a complete reannotation of the Arabidopsis thaliana reference genome.</title>
        <authorList>
            <person name="Cheng C.Y."/>
            <person name="Krishnakumar V."/>
            <person name="Chan A.P."/>
            <person name="Thibaud-Nissen F."/>
            <person name="Schobel S."/>
            <person name="Town C.D."/>
        </authorList>
    </citation>
    <scope>GENOME REANNOTATION</scope>
    <source>
        <strain>cv. Columbia</strain>
    </source>
</reference>
<accession>Q9FMB0</accession>
<name>GL19_ARATH</name>
<dbReference type="EMBL" id="AB009048">
    <property type="protein sequence ID" value="BAB08648.1"/>
    <property type="molecule type" value="Genomic_DNA"/>
</dbReference>
<dbReference type="EMBL" id="CP002688">
    <property type="protein sequence ID" value="AED94374.1"/>
    <property type="molecule type" value="Genomic_DNA"/>
</dbReference>
<dbReference type="RefSeq" id="NP_198707.1">
    <property type="nucleotide sequence ID" value="NM_123253.2"/>
</dbReference>
<dbReference type="SMR" id="Q9FMB0"/>
<dbReference type="FunCoup" id="Q9FMB0">
    <property type="interactions" value="30"/>
</dbReference>
<dbReference type="STRING" id="3702.Q9FMB0"/>
<dbReference type="GlyGen" id="Q9FMB0">
    <property type="glycosylation" value="1 site"/>
</dbReference>
<dbReference type="PaxDb" id="3702-AT5G38910.1"/>
<dbReference type="ProteomicsDB" id="247253"/>
<dbReference type="EnsemblPlants" id="AT5G38910.1">
    <property type="protein sequence ID" value="AT5G38910.1"/>
    <property type="gene ID" value="AT5G38910"/>
</dbReference>
<dbReference type="GeneID" id="833883"/>
<dbReference type="Gramene" id="AT5G38910.1">
    <property type="protein sequence ID" value="AT5G38910.1"/>
    <property type="gene ID" value="AT5G38910"/>
</dbReference>
<dbReference type="KEGG" id="ath:AT5G38910"/>
<dbReference type="Araport" id="AT5G38910"/>
<dbReference type="TAIR" id="AT5G38910"/>
<dbReference type="HOGENOM" id="CLU_015790_0_0_1"/>
<dbReference type="InParanoid" id="Q9FMB0"/>
<dbReference type="OMA" id="VNVMQIS"/>
<dbReference type="PhylomeDB" id="Q9FMB0"/>
<dbReference type="PRO" id="PR:Q9FMB0"/>
<dbReference type="Proteomes" id="UP000006548">
    <property type="component" value="Chromosome 5"/>
</dbReference>
<dbReference type="ExpressionAtlas" id="Q9FMB0">
    <property type="expression patterns" value="baseline and differential"/>
</dbReference>
<dbReference type="GO" id="GO:0048046">
    <property type="term" value="C:apoplast"/>
    <property type="evidence" value="ECO:0007669"/>
    <property type="project" value="UniProtKB-SubCell"/>
</dbReference>
<dbReference type="GO" id="GO:0030145">
    <property type="term" value="F:manganese ion binding"/>
    <property type="evidence" value="ECO:0007669"/>
    <property type="project" value="InterPro"/>
</dbReference>
<dbReference type="CDD" id="cd02241">
    <property type="entry name" value="cupin_OxOx"/>
    <property type="match status" value="1"/>
</dbReference>
<dbReference type="FunFam" id="2.60.120.10:FF:000005">
    <property type="entry name" value="Germin-like protein subfamily 1 member 8"/>
    <property type="match status" value="1"/>
</dbReference>
<dbReference type="Gene3D" id="2.60.120.10">
    <property type="entry name" value="Jelly Rolls"/>
    <property type="match status" value="1"/>
</dbReference>
<dbReference type="InterPro" id="IPR006045">
    <property type="entry name" value="Cupin_1"/>
</dbReference>
<dbReference type="InterPro" id="IPR001929">
    <property type="entry name" value="Germin"/>
</dbReference>
<dbReference type="InterPro" id="IPR019780">
    <property type="entry name" value="Germin_Mn-BS"/>
</dbReference>
<dbReference type="InterPro" id="IPR014710">
    <property type="entry name" value="RmlC-like_jellyroll"/>
</dbReference>
<dbReference type="InterPro" id="IPR011051">
    <property type="entry name" value="RmlC_Cupin_sf"/>
</dbReference>
<dbReference type="PANTHER" id="PTHR31238">
    <property type="entry name" value="GERMIN-LIKE PROTEIN SUBFAMILY 3 MEMBER 3"/>
    <property type="match status" value="1"/>
</dbReference>
<dbReference type="Pfam" id="PF00190">
    <property type="entry name" value="Cupin_1"/>
    <property type="match status" value="1"/>
</dbReference>
<dbReference type="PRINTS" id="PR00325">
    <property type="entry name" value="GERMIN"/>
</dbReference>
<dbReference type="SMART" id="SM00835">
    <property type="entry name" value="Cupin_1"/>
    <property type="match status" value="1"/>
</dbReference>
<dbReference type="SUPFAM" id="SSF51182">
    <property type="entry name" value="RmlC-like cupins"/>
    <property type="match status" value="1"/>
</dbReference>
<dbReference type="PROSITE" id="PS00725">
    <property type="entry name" value="GERMIN"/>
    <property type="match status" value="1"/>
</dbReference>
<evidence type="ECO:0000250" key="1"/>
<evidence type="ECO:0000255" key="2"/>
<evidence type="ECO:0000305" key="3"/>
<organism>
    <name type="scientific">Arabidopsis thaliana</name>
    <name type="common">Mouse-ear cress</name>
    <dbReference type="NCBI Taxonomy" id="3702"/>
    <lineage>
        <taxon>Eukaryota</taxon>
        <taxon>Viridiplantae</taxon>
        <taxon>Streptophyta</taxon>
        <taxon>Embryophyta</taxon>
        <taxon>Tracheophyta</taxon>
        <taxon>Spermatophyta</taxon>
        <taxon>Magnoliopsida</taxon>
        <taxon>eudicotyledons</taxon>
        <taxon>Gunneridae</taxon>
        <taxon>Pentapetalae</taxon>
        <taxon>rosids</taxon>
        <taxon>malvids</taxon>
        <taxon>Brassicales</taxon>
        <taxon>Brassicaceae</taxon>
        <taxon>Camelineae</taxon>
        <taxon>Arabidopsis</taxon>
    </lineage>
</organism>